<organism>
    <name type="scientific">Caenorhabditis elegans</name>
    <dbReference type="NCBI Taxonomy" id="6239"/>
    <lineage>
        <taxon>Eukaryota</taxon>
        <taxon>Metazoa</taxon>
        <taxon>Ecdysozoa</taxon>
        <taxon>Nematoda</taxon>
        <taxon>Chromadorea</taxon>
        <taxon>Rhabditida</taxon>
        <taxon>Rhabditina</taxon>
        <taxon>Rhabditomorpha</taxon>
        <taxon>Rhabditoidea</taxon>
        <taxon>Rhabditidae</taxon>
        <taxon>Peloderinae</taxon>
        <taxon>Caenorhabditis</taxon>
    </lineage>
</organism>
<name>KDM1A_CAEEL</name>
<sequence>MSSDTGSEYLDEEIRGDELGPSIDDNALAAAASAARLPFDRPTDHELAFFPELWEHKTAVEVFLLLRNSTLATWQYNPLKECTALDVRNNVFPPFNSDLDLIQNIVHYLSRHGLINFGRYVRSTKISRFLVRDRRSVIVIGAGAAGISAATQLESFGFDVIVLEARNCIGGRIHSFKSKSGEIMETGGDTLRKIEDSPMATLLHQVNFEEHGVFDFTSVFVEGRPLNEEKIHLFLDHYKSAHGALNYQAHQCEHRDDQGSFISRQQAYENLLSMCERGTLIKYYNFCKSLETVARAREHHFNQMKQLRMTALMAENQLKKMEEEGNLEQDPVLRRSLKRDIATSLEKFEEVADAFETADNHWQRLNEHPQAKQYMHPGSEFATFNFMLGFEEYLVGAQLEKVQFSCDSMQNKENGVAARLTEGIAELLTQLSEKRKLDIRLKHRVLDIDYSGFEHVLLKVQRENGDIEEMKAAFVVSTLPIGVLKKTIIADERAPTFTPSLPDKKVEAIRNIGCGSVNKCILEFDRVFWTANGGRNQFVTVSPNIKTRGSMNIWSSVPGSKVLCTYIVGEEAMLELPDDVIIQNAMINLQKAFGNNCPRAPISAHITRWHDDELAFGSGAFMSLRTETTSFDDVMEPLKTSDGMSRVYFAGEHTCSSYTSTIQGAWMSGARAAADISNDHIGIGFVDISGTRGQRGDEEEELLIEVDIDGKIPEKDENEAVADIPNAPNAPNAQKPEEIPKIAEEIELVAEAEKAEKAEVQLEPLVPTVE</sequence>
<feature type="chain" id="PRO_0000099883" description="Lysine-specific histone demethylase 1">
    <location>
        <begin position="1"/>
        <end position="770"/>
    </location>
</feature>
<feature type="domain" description="SWIRM" evidence="4">
    <location>
        <begin position="28"/>
        <end position="126"/>
    </location>
</feature>
<feature type="region of interest" description="Disordered" evidence="5">
    <location>
        <begin position="1"/>
        <end position="21"/>
    </location>
</feature>
<feature type="region of interest" description="Disordered" evidence="5">
    <location>
        <begin position="718"/>
        <end position="739"/>
    </location>
</feature>
<feature type="binding site" evidence="3">
    <location>
        <begin position="137"/>
        <end position="165"/>
    </location>
    <ligand>
        <name>FAD</name>
        <dbReference type="ChEBI" id="CHEBI:57692"/>
    </ligand>
</feature>
<feature type="mutagenesis site" description="In ar197; results in suppression of Sel-12 mutant phenotypes." evidence="6">
    <original>A</original>
    <variation>T</variation>
    <location>
        <position position="665"/>
    </location>
</feature>
<dbReference type="EC" id="1.14.99.66" evidence="14"/>
<dbReference type="EMBL" id="AY152852">
    <property type="protein sequence ID" value="AAN62580.1"/>
    <property type="molecule type" value="mRNA"/>
</dbReference>
<dbReference type="EMBL" id="BX284601">
    <property type="protein sequence ID" value="CAA21604.1"/>
    <property type="molecule type" value="Genomic_DNA"/>
</dbReference>
<dbReference type="PIR" id="T26783">
    <property type="entry name" value="T26783"/>
</dbReference>
<dbReference type="RefSeq" id="NP_493366.1">
    <property type="nucleotide sequence ID" value="NM_060965.7"/>
</dbReference>
<dbReference type="SMR" id="Q9XWP6"/>
<dbReference type="BioGRID" id="38609">
    <property type="interactions" value="12"/>
</dbReference>
<dbReference type="DIP" id="DIP-24825N"/>
<dbReference type="FunCoup" id="Q9XWP6">
    <property type="interactions" value="2623"/>
</dbReference>
<dbReference type="IntAct" id="Q9XWP6">
    <property type="interactions" value="3"/>
</dbReference>
<dbReference type="STRING" id="6239.Y40B1B.6.1"/>
<dbReference type="PaxDb" id="6239-Y40B1B.6"/>
<dbReference type="PeptideAtlas" id="Q9XWP6"/>
<dbReference type="EnsemblMetazoa" id="Y40B1B.6.1">
    <property type="protein sequence ID" value="Y40B1B.6.1"/>
    <property type="gene ID" value="WBGene00005010"/>
</dbReference>
<dbReference type="EnsemblMetazoa" id="Y40B1B.6.2">
    <property type="protein sequence ID" value="Y40B1B.6.2"/>
    <property type="gene ID" value="WBGene00005010"/>
</dbReference>
<dbReference type="GeneID" id="173214"/>
<dbReference type="KEGG" id="cel:CELE_Y40B1B.6"/>
<dbReference type="UCSC" id="Y40B1B.6.1">
    <property type="organism name" value="c. elegans"/>
</dbReference>
<dbReference type="AGR" id="WB:WBGene00005010"/>
<dbReference type="CTD" id="173214"/>
<dbReference type="WormBase" id="Y40B1B.6">
    <property type="protein sequence ID" value="CE20240"/>
    <property type="gene ID" value="WBGene00005010"/>
    <property type="gene designation" value="spr-5"/>
</dbReference>
<dbReference type="eggNOG" id="KOG0029">
    <property type="taxonomic scope" value="Eukaryota"/>
</dbReference>
<dbReference type="GeneTree" id="ENSGT00940000172632"/>
<dbReference type="HOGENOM" id="CLU_004498_5_1_1"/>
<dbReference type="InParanoid" id="Q9XWP6"/>
<dbReference type="OMA" id="VTHWERE"/>
<dbReference type="OrthoDB" id="9982100at2759"/>
<dbReference type="PhylomeDB" id="Q9XWP6"/>
<dbReference type="BRENDA" id="1.14.99.66">
    <property type="organism ID" value="1045"/>
</dbReference>
<dbReference type="SignaLink" id="Q9XWP6"/>
<dbReference type="PRO" id="PR:Q9XWP6"/>
<dbReference type="Proteomes" id="UP000001940">
    <property type="component" value="Chromosome I"/>
</dbReference>
<dbReference type="Bgee" id="WBGene00005010">
    <property type="expression patterns" value="Expressed in embryo and 4 other cell types or tissues"/>
</dbReference>
<dbReference type="GO" id="GO:0000785">
    <property type="term" value="C:chromatin"/>
    <property type="evidence" value="ECO:0000318"/>
    <property type="project" value="GO_Central"/>
</dbReference>
<dbReference type="GO" id="GO:0005737">
    <property type="term" value="C:cytoplasm"/>
    <property type="evidence" value="ECO:0000314"/>
    <property type="project" value="WormBase"/>
</dbReference>
<dbReference type="GO" id="GO:0005634">
    <property type="term" value="C:nucleus"/>
    <property type="evidence" value="ECO:0000314"/>
    <property type="project" value="WormBase"/>
</dbReference>
<dbReference type="GO" id="GO:0003682">
    <property type="term" value="F:chromatin binding"/>
    <property type="evidence" value="ECO:0000318"/>
    <property type="project" value="GO_Central"/>
</dbReference>
<dbReference type="GO" id="GO:0140682">
    <property type="term" value="F:FAD-dependent H3K4me/H3K4me3 demethylase activity"/>
    <property type="evidence" value="ECO:0000315"/>
    <property type="project" value="WormBase"/>
</dbReference>
<dbReference type="GO" id="GO:0050660">
    <property type="term" value="F:flavin adenine dinucleotide binding"/>
    <property type="evidence" value="ECO:0000318"/>
    <property type="project" value="GO_Central"/>
</dbReference>
<dbReference type="GO" id="GO:0040029">
    <property type="term" value="P:epigenetic regulation of gene expression"/>
    <property type="evidence" value="ECO:0000315"/>
    <property type="project" value="WormBase"/>
</dbReference>
<dbReference type="GO" id="GO:0006355">
    <property type="term" value="P:regulation of DNA-templated transcription"/>
    <property type="evidence" value="ECO:0007669"/>
    <property type="project" value="InterPro"/>
</dbReference>
<dbReference type="FunFam" id="1.10.10.10:FF:000064">
    <property type="entry name" value="Lysine-specific histone demethylase 1A"/>
    <property type="match status" value="1"/>
</dbReference>
<dbReference type="Gene3D" id="3.90.660.10">
    <property type="match status" value="1"/>
</dbReference>
<dbReference type="Gene3D" id="3.50.50.60">
    <property type="entry name" value="FAD/NAD(P)-binding domain"/>
    <property type="match status" value="2"/>
</dbReference>
<dbReference type="Gene3D" id="1.10.10.10">
    <property type="entry name" value="Winged helix-like DNA-binding domain superfamily/Winged helix DNA-binding domain"/>
    <property type="match status" value="1"/>
</dbReference>
<dbReference type="InterPro" id="IPR002937">
    <property type="entry name" value="Amino_oxidase"/>
</dbReference>
<dbReference type="InterPro" id="IPR036188">
    <property type="entry name" value="FAD/NAD-bd_sf"/>
</dbReference>
<dbReference type="InterPro" id="IPR050281">
    <property type="entry name" value="Flavin_monoamine_oxidase"/>
</dbReference>
<dbReference type="InterPro" id="IPR017366">
    <property type="entry name" value="Hist_Lys-spec_deMease"/>
</dbReference>
<dbReference type="InterPro" id="IPR009057">
    <property type="entry name" value="Homeodomain-like_sf"/>
</dbReference>
<dbReference type="InterPro" id="IPR007526">
    <property type="entry name" value="SWIRM"/>
</dbReference>
<dbReference type="InterPro" id="IPR036388">
    <property type="entry name" value="WH-like_DNA-bd_sf"/>
</dbReference>
<dbReference type="PANTHER" id="PTHR10742">
    <property type="entry name" value="FLAVIN MONOAMINE OXIDASE"/>
    <property type="match status" value="1"/>
</dbReference>
<dbReference type="PANTHER" id="PTHR10742:SF386">
    <property type="entry name" value="LYSINE-SPECIFIC HISTONE DEMETHYLASE 1A"/>
    <property type="match status" value="1"/>
</dbReference>
<dbReference type="Pfam" id="PF01593">
    <property type="entry name" value="Amino_oxidase"/>
    <property type="match status" value="1"/>
</dbReference>
<dbReference type="Pfam" id="PF04433">
    <property type="entry name" value="SWIRM"/>
    <property type="match status" value="1"/>
</dbReference>
<dbReference type="PIRSF" id="PIRSF038051">
    <property type="entry name" value="Histone_Lys-demethylase"/>
    <property type="match status" value="1"/>
</dbReference>
<dbReference type="SUPFAM" id="SSF54373">
    <property type="entry name" value="FAD-linked reductases, C-terminal domain"/>
    <property type="match status" value="1"/>
</dbReference>
<dbReference type="SUPFAM" id="SSF51905">
    <property type="entry name" value="FAD/NAD(P)-binding domain"/>
    <property type="match status" value="1"/>
</dbReference>
<dbReference type="SUPFAM" id="SSF46689">
    <property type="entry name" value="Homeodomain-like"/>
    <property type="match status" value="1"/>
</dbReference>
<dbReference type="PROSITE" id="PS50934">
    <property type="entry name" value="SWIRM"/>
    <property type="match status" value="1"/>
</dbReference>
<evidence type="ECO:0000250" key="1"/>
<evidence type="ECO:0000250" key="2">
    <source>
        <dbReference type="UniProtKB" id="O60341"/>
    </source>
</evidence>
<evidence type="ECO:0000255" key="3"/>
<evidence type="ECO:0000255" key="4">
    <source>
        <dbReference type="PROSITE-ProRule" id="PRU00247"/>
    </source>
</evidence>
<evidence type="ECO:0000256" key="5">
    <source>
        <dbReference type="SAM" id="MobiDB-lite"/>
    </source>
</evidence>
<evidence type="ECO:0000269" key="6">
    <source>
    </source>
</evidence>
<evidence type="ECO:0000269" key="7">
    <source>
    </source>
</evidence>
<evidence type="ECO:0000269" key="8">
    <source>
    </source>
</evidence>
<evidence type="ECO:0000269" key="9">
    <source>
    </source>
</evidence>
<evidence type="ECO:0000269" key="10">
    <source>
    </source>
</evidence>
<evidence type="ECO:0000269" key="11">
    <source>
    </source>
</evidence>
<evidence type="ECO:0000303" key="12">
    <source>
    </source>
</evidence>
<evidence type="ECO:0000305" key="13"/>
<evidence type="ECO:0000305" key="14">
    <source>
    </source>
</evidence>
<evidence type="ECO:0000312" key="15">
    <source>
        <dbReference type="WormBase" id="Y40B1B.6"/>
    </source>
</evidence>
<proteinExistence type="evidence at protein level"/>
<gene>
    <name evidence="15" type="primary">spr-5</name>
    <name evidence="15" type="ORF">Y40B1B.6</name>
</gene>
<accession>Q9XWP6</accession>
<reference key="1">
    <citation type="journal article" date="2002" name="EMBO J.">
        <title>Loss of spr-5 bypasses the requirement for the C.elegans presenilin sel-12 by derepressing hop-1.</title>
        <authorList>
            <person name="Eimer S."/>
            <person name="Lakowski B."/>
            <person name="Donhauser R."/>
            <person name="Baumeister R."/>
        </authorList>
    </citation>
    <scope>NUCLEOTIDE SEQUENCE [MRNA]</scope>
    <scope>FUNCTION</scope>
    <scope>DEVELOPMENTAL STAGE</scope>
    <scope>INTERACTION WITH SPR-1</scope>
    <scope>DISRUPTION PHENOTYPE</scope>
</reference>
<reference key="2">
    <citation type="journal article" date="2002" name="Genes Dev.">
        <title>Suppressors of the egg-laying defective phenotype of sel-12 presenilin mutants implicate the CoREST corepressor complex in LIN-12/Notch signaling in C. elegans.</title>
        <authorList>
            <person name="Jarriault S."/>
            <person name="Greenwald I."/>
        </authorList>
    </citation>
    <scope>NUCLEOTIDE SEQUENCE [MRNA]</scope>
    <scope>FUNCTION</scope>
    <scope>MUTAGENESIS OF ALA-665</scope>
</reference>
<reference key="3">
    <citation type="journal article" date="1998" name="Science">
        <title>Genome sequence of the nematode C. elegans: a platform for investigating biology.</title>
        <authorList>
            <consortium name="The C. elegans sequencing consortium"/>
        </authorList>
    </citation>
    <scope>NUCLEOTIDE SEQUENCE [LARGE SCALE GENOMIC DNA]</scope>
    <source>
        <strain>Bristol N2</strain>
    </source>
</reference>
<reference key="4">
    <citation type="journal article" date="2014" name="Cell Rep.">
        <title>A histone methylation network regulates transgenerational epigenetic memory in C. elegans.</title>
        <authorList>
            <person name="Greer E.L."/>
            <person name="Beese-Sims S.E."/>
            <person name="Brookes E."/>
            <person name="Spadafora R."/>
            <person name="Zhu Y."/>
            <person name="Rothbart S.B."/>
            <person name="Aristizabal-Corrales D."/>
            <person name="Chen S."/>
            <person name="Badeaux A.I."/>
            <person name="Jin Q."/>
            <person name="Wang W."/>
            <person name="Strahl B.D."/>
            <person name="Colaiacovo M.P."/>
            <person name="Shi Y."/>
        </authorList>
    </citation>
    <scope>FUNCTION</scope>
    <scope>DISRUPTION PHENOTYPE</scope>
</reference>
<reference evidence="13" key="5">
    <citation type="journal article" date="2015" name="Nucleic Acids Res.">
        <title>H3K23me2 is a new heterochromatic mark in Caenorhabditis elegans.</title>
        <authorList>
            <person name="Vandamme J."/>
            <person name="Sidoli S."/>
            <person name="Mariani L."/>
            <person name="Friis C."/>
            <person name="Christensen J."/>
            <person name="Helin K."/>
            <person name="Jensen O.N."/>
            <person name="Salcini A.E."/>
        </authorList>
    </citation>
    <scope>INTERACTION WITH HPL-1</scope>
</reference>
<reference key="6">
    <citation type="journal article" date="2020" name="Nat. Struct. Mol. Biol.">
        <title>H3K4me2 regulates the recovery of protein biosynthesis and homeostasis following DNA damage.</title>
        <authorList>
            <person name="Wang S."/>
            <person name="Meyer D.H."/>
            <person name="Schumacher B."/>
        </authorList>
    </citation>
    <scope>FUNCTION</scope>
</reference>
<reference key="7">
    <citation type="journal article" date="2021" name="PLoS Genet.">
        <title>Histone demethylase AMX-1 is necessary for proper sensitivity to interstrand crosslink DNA damage.</title>
        <authorList>
            <person name="Zhang X."/>
            <person name="Tian S."/>
            <person name="Beese-Sims S.E."/>
            <person name="Chen J."/>
            <person name="Shin N."/>
            <person name="Colaiacovo M.P."/>
            <person name="Kim H.M."/>
        </authorList>
    </citation>
    <scope>FUNCTION</scope>
    <scope>CATALYTIC ACTIVITY</scope>
</reference>
<protein>
    <recommendedName>
        <fullName evidence="13">Lysine-specific histone demethylase 1</fullName>
        <ecNumber evidence="14">1.14.99.66</ecNumber>
    </recommendedName>
    <alternativeName>
        <fullName>P110b homolog</fullName>
    </alternativeName>
    <alternativeName>
        <fullName>Suppressor of presenilin 5</fullName>
    </alternativeName>
</protein>
<keyword id="KW-0156">Chromatin regulator</keyword>
<keyword id="KW-0274">FAD</keyword>
<keyword id="KW-0285">Flavoprotein</keyword>
<keyword id="KW-0539">Nucleus</keyword>
<keyword id="KW-0560">Oxidoreductase</keyword>
<keyword id="KW-1185">Reference proteome</keyword>
<keyword id="KW-0678">Repressor</keyword>
<keyword id="KW-0804">Transcription</keyword>
<keyword id="KW-0805">Transcription regulation</keyword>
<comment type="function">
    <text evidence="2 6 7 8 10 11">Histone demethylase that specifically demethylates 'Lys-4' of histone H3, a specific tag for epigenetic transcriptional activation, thereby acting as a corepressor (PubMed:34329293). Acts by oxidizing the substrate by FAD to generate the corresponding imine that is subsequently hydrolyzed. Demethylates both mono- and di-methylated 'Lys-4' of histone H3 (By similarity). May be involved in H3 demethylation in mitotic cells including gut and embryonic cells (PubMed:34329293). Participates in the transcriptional repression of the presenilin protein hop-1 (PubMed:12411496). May act via the formation of a multiprotein complex that remodel or modify the chromatin (PubMed:12381669). Together with met-2, set-17 and set-26, required for transgenerational fertility (PubMed:24685137). Plays a role in developmental growth and lifespan regulation in response to ultraviolet-induced damage (PubMed:33046905).</text>
</comment>
<comment type="catalytic activity">
    <reaction evidence="14">
        <text>N(6),N(6)-dimethyl-L-lysyl(4)-[histone H3] + 2 A + 2 H2O = L-lysyl(4)-[histone H3] + 2 formaldehyde + 2 AH2</text>
        <dbReference type="Rhea" id="RHEA:60244"/>
        <dbReference type="Rhea" id="RHEA-COMP:15540"/>
        <dbReference type="Rhea" id="RHEA-COMP:15547"/>
        <dbReference type="ChEBI" id="CHEBI:13193"/>
        <dbReference type="ChEBI" id="CHEBI:15377"/>
        <dbReference type="ChEBI" id="CHEBI:16842"/>
        <dbReference type="ChEBI" id="CHEBI:17499"/>
        <dbReference type="ChEBI" id="CHEBI:29969"/>
        <dbReference type="ChEBI" id="CHEBI:61976"/>
        <dbReference type="EC" id="1.14.99.66"/>
    </reaction>
</comment>
<comment type="cofactor">
    <cofactor evidence="1">
        <name>FAD</name>
        <dbReference type="ChEBI" id="CHEBI:57692"/>
    </cofactor>
</comment>
<comment type="subunit">
    <text evidence="7 9 12">Probably part of a large repressor complex (PubMed:12411496). Interacts with CoREST protein spr-1 (PubMed:12411496). Interacts with chromobox protein homolog hpl-1 (PubMed:26476455).</text>
</comment>
<comment type="interaction">
    <interactant intactId="EBI-312097">
        <id>Q9XWP6</id>
    </interactant>
    <interactant intactId="EBI-312105">
        <id>Q9XVK6</id>
        <label>wve-1</label>
    </interactant>
    <organismsDiffer>false</organismsDiffer>
    <experiments>2</experiments>
</comment>
<comment type="subcellular location">
    <subcellularLocation>
        <location evidence="13">Nucleus</location>
    </subcellularLocation>
</comment>
<comment type="developmental stage">
    <text evidence="7">Expressed throughout the development. Expressed in embryos, L1, L2, L3 and L4 larval stages and in adults.</text>
</comment>
<comment type="disruption phenotype">
    <text evidence="7 8">Progressive loss of fertility and accumulation of histone H3 'Lys-4' dimethylation (H3K4me2) over generations (PubMed:24685137). Suppression of sel-12 mutant phenotypes, possibly by up-regulating hop-1 expression (PubMed:12411496).</text>
</comment>
<comment type="similarity">
    <text evidence="13">Belongs to the flavin monoamine oxidase family.</text>
</comment>